<feature type="chain" id="PRO_0000362852" description="NAD(P)H-quinone oxidoreductase subunit 3, chloroplastic">
    <location>
        <begin position="1"/>
        <end position="120"/>
    </location>
</feature>
<feature type="transmembrane region" description="Helical" evidence="1">
    <location>
        <begin position="9"/>
        <end position="29"/>
    </location>
</feature>
<feature type="transmembrane region" description="Helical" evidence="1">
    <location>
        <begin position="64"/>
        <end position="84"/>
    </location>
</feature>
<feature type="transmembrane region" description="Helical" evidence="1">
    <location>
        <begin position="88"/>
        <end position="108"/>
    </location>
</feature>
<geneLocation type="chloroplast"/>
<evidence type="ECO:0000255" key="1">
    <source>
        <dbReference type="HAMAP-Rule" id="MF_01394"/>
    </source>
</evidence>
<dbReference type="EC" id="7.1.1.-" evidence="1"/>
<dbReference type="EMBL" id="AP009376">
    <property type="protein sequence ID" value="BAF50643.1"/>
    <property type="molecule type" value="Genomic_DNA"/>
</dbReference>
<dbReference type="RefSeq" id="YP_001123819.1">
    <property type="nucleotide sequence ID" value="NC_009275.1"/>
</dbReference>
<dbReference type="SMR" id="A4QLT8"/>
<dbReference type="GeneID" id="4962170"/>
<dbReference type="GO" id="GO:0009535">
    <property type="term" value="C:chloroplast thylakoid membrane"/>
    <property type="evidence" value="ECO:0007669"/>
    <property type="project" value="UniProtKB-SubCell"/>
</dbReference>
<dbReference type="GO" id="GO:0030964">
    <property type="term" value="C:NADH dehydrogenase complex"/>
    <property type="evidence" value="ECO:0007669"/>
    <property type="project" value="TreeGrafter"/>
</dbReference>
<dbReference type="GO" id="GO:0008137">
    <property type="term" value="F:NADH dehydrogenase (ubiquinone) activity"/>
    <property type="evidence" value="ECO:0007669"/>
    <property type="project" value="InterPro"/>
</dbReference>
<dbReference type="GO" id="GO:0048038">
    <property type="term" value="F:quinone binding"/>
    <property type="evidence" value="ECO:0007669"/>
    <property type="project" value="UniProtKB-KW"/>
</dbReference>
<dbReference type="GO" id="GO:0019684">
    <property type="term" value="P:photosynthesis, light reaction"/>
    <property type="evidence" value="ECO:0007669"/>
    <property type="project" value="UniProtKB-UniRule"/>
</dbReference>
<dbReference type="FunFam" id="1.20.58.1610:FF:000001">
    <property type="entry name" value="NAD(P)H-quinone oxidoreductase subunit 3, chloroplastic"/>
    <property type="match status" value="1"/>
</dbReference>
<dbReference type="Gene3D" id="1.20.58.1610">
    <property type="entry name" value="NADH:ubiquinone/plastoquinone oxidoreductase, chain 3"/>
    <property type="match status" value="1"/>
</dbReference>
<dbReference type="HAMAP" id="MF_01394">
    <property type="entry name" value="NDH1_NuoA"/>
    <property type="match status" value="1"/>
</dbReference>
<dbReference type="InterPro" id="IPR023043">
    <property type="entry name" value="NAD(P)H_OxRDtase_bac/plastid"/>
</dbReference>
<dbReference type="InterPro" id="IPR000440">
    <property type="entry name" value="NADH_UbQ/plastoQ_OxRdtase_su3"/>
</dbReference>
<dbReference type="InterPro" id="IPR038430">
    <property type="entry name" value="NDAH_ubi_oxred_su3_sf"/>
</dbReference>
<dbReference type="PANTHER" id="PTHR11058">
    <property type="entry name" value="NADH-UBIQUINONE OXIDOREDUCTASE CHAIN 3"/>
    <property type="match status" value="1"/>
</dbReference>
<dbReference type="PANTHER" id="PTHR11058:SF9">
    <property type="entry name" value="NADH-UBIQUINONE OXIDOREDUCTASE CHAIN 3"/>
    <property type="match status" value="1"/>
</dbReference>
<dbReference type="Pfam" id="PF00507">
    <property type="entry name" value="Oxidored_q4"/>
    <property type="match status" value="1"/>
</dbReference>
<name>NU3C_NASOF</name>
<sequence length="120" mass="13873">MFLLYEYDIFWAFLIISSAIPVLAFFISGVLSPIRKGPEKLSSYESGIEPIGDAWLQFRIRYYMFALVFVVFDVETVFLYPWAMSFDVLGVSAFIEAFIFVLILILGLVYAWRKGALEWS</sequence>
<protein>
    <recommendedName>
        <fullName evidence="1">NAD(P)H-quinone oxidoreductase subunit 3, chloroplastic</fullName>
        <ecNumber evidence="1">7.1.1.-</ecNumber>
    </recommendedName>
    <alternativeName>
        <fullName evidence="1">NAD(P)H dehydrogenase subunit 3</fullName>
    </alternativeName>
    <alternativeName>
        <fullName evidence="1">NADH-plastoquinone oxidoreductase subunit 3</fullName>
    </alternativeName>
</protein>
<reference key="1">
    <citation type="submission" date="2007-03" db="EMBL/GenBank/DDBJ databases">
        <title>Sequencing analysis of Nasturtium officinale chloroplast DNA.</title>
        <authorList>
            <person name="Hosouchi T."/>
            <person name="Tsuruoka H."/>
            <person name="Kotani H."/>
        </authorList>
    </citation>
    <scope>NUCLEOTIDE SEQUENCE [LARGE SCALE GENOMIC DNA]</scope>
</reference>
<organism>
    <name type="scientific">Nasturtium officinale</name>
    <name type="common">Watercress</name>
    <name type="synonym">Rorippa nasturtium-aquaticum</name>
    <dbReference type="NCBI Taxonomy" id="65948"/>
    <lineage>
        <taxon>Eukaryota</taxon>
        <taxon>Viridiplantae</taxon>
        <taxon>Streptophyta</taxon>
        <taxon>Embryophyta</taxon>
        <taxon>Tracheophyta</taxon>
        <taxon>Spermatophyta</taxon>
        <taxon>Magnoliopsida</taxon>
        <taxon>eudicotyledons</taxon>
        <taxon>Gunneridae</taxon>
        <taxon>Pentapetalae</taxon>
        <taxon>rosids</taxon>
        <taxon>malvids</taxon>
        <taxon>Brassicales</taxon>
        <taxon>Brassicaceae</taxon>
        <taxon>Cardamineae</taxon>
        <taxon>Nasturtium</taxon>
    </lineage>
</organism>
<proteinExistence type="inferred from homology"/>
<keyword id="KW-0150">Chloroplast</keyword>
<keyword id="KW-0472">Membrane</keyword>
<keyword id="KW-0520">NAD</keyword>
<keyword id="KW-0521">NADP</keyword>
<keyword id="KW-0934">Plastid</keyword>
<keyword id="KW-0618">Plastoquinone</keyword>
<keyword id="KW-0874">Quinone</keyword>
<keyword id="KW-0793">Thylakoid</keyword>
<keyword id="KW-1278">Translocase</keyword>
<keyword id="KW-0812">Transmembrane</keyword>
<keyword id="KW-1133">Transmembrane helix</keyword>
<keyword id="KW-0813">Transport</keyword>
<comment type="function">
    <text evidence="1">NDH shuttles electrons from NAD(P)H:plastoquinone, via FMN and iron-sulfur (Fe-S) centers, to quinones in the photosynthetic chain and possibly in a chloroplast respiratory chain. The immediate electron acceptor for the enzyme in this species is believed to be plastoquinone. Couples the redox reaction to proton translocation, and thus conserves the redox energy in a proton gradient.</text>
</comment>
<comment type="catalytic activity">
    <reaction evidence="1">
        <text>a plastoquinone + NADH + (n+1) H(+)(in) = a plastoquinol + NAD(+) + n H(+)(out)</text>
        <dbReference type="Rhea" id="RHEA:42608"/>
        <dbReference type="Rhea" id="RHEA-COMP:9561"/>
        <dbReference type="Rhea" id="RHEA-COMP:9562"/>
        <dbReference type="ChEBI" id="CHEBI:15378"/>
        <dbReference type="ChEBI" id="CHEBI:17757"/>
        <dbReference type="ChEBI" id="CHEBI:57540"/>
        <dbReference type="ChEBI" id="CHEBI:57945"/>
        <dbReference type="ChEBI" id="CHEBI:62192"/>
    </reaction>
</comment>
<comment type="catalytic activity">
    <reaction evidence="1">
        <text>a plastoquinone + NADPH + (n+1) H(+)(in) = a plastoquinol + NADP(+) + n H(+)(out)</text>
        <dbReference type="Rhea" id="RHEA:42612"/>
        <dbReference type="Rhea" id="RHEA-COMP:9561"/>
        <dbReference type="Rhea" id="RHEA-COMP:9562"/>
        <dbReference type="ChEBI" id="CHEBI:15378"/>
        <dbReference type="ChEBI" id="CHEBI:17757"/>
        <dbReference type="ChEBI" id="CHEBI:57783"/>
        <dbReference type="ChEBI" id="CHEBI:58349"/>
        <dbReference type="ChEBI" id="CHEBI:62192"/>
    </reaction>
</comment>
<comment type="subunit">
    <text evidence="1">NDH is composed of at least 16 different subunits, 5 of which are encoded in the nucleus.</text>
</comment>
<comment type="subcellular location">
    <subcellularLocation>
        <location evidence="1">Plastid</location>
        <location evidence="1">Chloroplast thylakoid membrane</location>
        <topology evidence="1">Multi-pass membrane protein</topology>
    </subcellularLocation>
</comment>
<comment type="similarity">
    <text evidence="1">Belongs to the complex I subunit 3 family.</text>
</comment>
<gene>
    <name evidence="1" type="primary">ndhC</name>
</gene>
<accession>A4QLT8</accession>